<sequence length="517" mass="57500">MSQQVIIFDTTLRDGEQALQASLNVKEKLQIAFALERLGVDIMEVGFPISSPGDFESVHTIAQKIKNSLVCALARCIDNDIDVAAEALKVAKNFRIHIFLPTSNVHIQSKLKKNFDQIIDMTVHAIRYARKYTDDIEFSCEDAGRTNIDNLCRIVEIAIQSGASTINIPDTVGYTTPYQFGQIITSLYNRVPIIDKAIISVHCHDDLGMAVGNSISAIQAGARQIEGTINGIGERAGNTALEEIIMAIKVREDLLNVHTNVRCQEIYRASQVVSQLCNIPIPANKAIVGSNAFSHSAGIHQDGILKNRKNYEIMTPETIGLKDVKLNLTSRSGRAAVKHHMKTMGYQESDYDMDKLYDVFLELADKKGQVFDYDLEALAFINNQQEQSEFFRLKCFHVDSSSSEVAHASVKLYCGNNTYTHSSSGNGPIDAIYEALTHISKLSINLERYQLNAKGHGRNALGQVDIVVSYEGRNFHGVGLDTDVIKSSVKAMIHVLNNIWRAKQVIIQRKYIKKNNN</sequence>
<reference key="1">
    <citation type="journal article" date="2005" name="Genome Res.">
        <title>Genome sequence of Blochmannia pennsylvanicus indicates parallel evolutionary trends among bacterial mutualists of insects.</title>
        <authorList>
            <person name="Degnan P.H."/>
            <person name="Lazarus A.B."/>
            <person name="Wernegreen J.J."/>
        </authorList>
    </citation>
    <scope>NUCLEOTIDE SEQUENCE [LARGE SCALE GENOMIC DNA]</scope>
    <source>
        <strain>BPEN</strain>
    </source>
</reference>
<comment type="function">
    <text evidence="1">Catalyzes the condensation of the acetyl group of acetyl-CoA with 3-methyl-2-oxobutanoate (2-ketoisovalerate) to form 3-carboxy-3-hydroxy-4-methylpentanoate (2-isopropylmalate).</text>
</comment>
<comment type="catalytic activity">
    <reaction evidence="1">
        <text>3-methyl-2-oxobutanoate + acetyl-CoA + H2O = (2S)-2-isopropylmalate + CoA + H(+)</text>
        <dbReference type="Rhea" id="RHEA:21524"/>
        <dbReference type="ChEBI" id="CHEBI:1178"/>
        <dbReference type="ChEBI" id="CHEBI:11851"/>
        <dbReference type="ChEBI" id="CHEBI:15377"/>
        <dbReference type="ChEBI" id="CHEBI:15378"/>
        <dbReference type="ChEBI" id="CHEBI:57287"/>
        <dbReference type="ChEBI" id="CHEBI:57288"/>
        <dbReference type="EC" id="2.3.3.13"/>
    </reaction>
</comment>
<comment type="cofactor">
    <cofactor evidence="1">
        <name>Mn(2+)</name>
        <dbReference type="ChEBI" id="CHEBI:29035"/>
    </cofactor>
</comment>
<comment type="pathway">
    <text evidence="1">Amino-acid biosynthesis; L-leucine biosynthesis; L-leucine from 3-methyl-2-oxobutanoate: step 1/4.</text>
</comment>
<comment type="subunit">
    <text evidence="1">Homodimer.</text>
</comment>
<comment type="subcellular location">
    <subcellularLocation>
        <location evidence="1">Cytoplasm</location>
    </subcellularLocation>
</comment>
<comment type="similarity">
    <text evidence="1">Belongs to the alpha-IPM synthase/homocitrate synthase family. LeuA type 1 subfamily.</text>
</comment>
<feature type="chain" id="PRO_1000149140" description="2-isopropylmalate synthase">
    <location>
        <begin position="1"/>
        <end position="517"/>
    </location>
</feature>
<feature type="domain" description="Pyruvate carboxyltransferase" evidence="1">
    <location>
        <begin position="5"/>
        <end position="267"/>
    </location>
</feature>
<feature type="region of interest" description="Regulatory domain" evidence="1">
    <location>
        <begin position="392"/>
        <end position="517"/>
    </location>
</feature>
<feature type="binding site" evidence="1">
    <location>
        <position position="14"/>
    </location>
    <ligand>
        <name>Mn(2+)</name>
        <dbReference type="ChEBI" id="CHEBI:29035"/>
    </ligand>
</feature>
<feature type="binding site" evidence="1">
    <location>
        <position position="202"/>
    </location>
    <ligand>
        <name>Mn(2+)</name>
        <dbReference type="ChEBI" id="CHEBI:29035"/>
    </ligand>
</feature>
<feature type="binding site" evidence="1">
    <location>
        <position position="204"/>
    </location>
    <ligand>
        <name>Mn(2+)</name>
        <dbReference type="ChEBI" id="CHEBI:29035"/>
    </ligand>
</feature>
<feature type="binding site" evidence="1">
    <location>
        <position position="238"/>
    </location>
    <ligand>
        <name>Mn(2+)</name>
        <dbReference type="ChEBI" id="CHEBI:29035"/>
    </ligand>
</feature>
<organism>
    <name type="scientific">Blochmanniella pennsylvanica (strain BPEN)</name>
    <dbReference type="NCBI Taxonomy" id="291272"/>
    <lineage>
        <taxon>Bacteria</taxon>
        <taxon>Pseudomonadati</taxon>
        <taxon>Pseudomonadota</taxon>
        <taxon>Gammaproteobacteria</taxon>
        <taxon>Enterobacterales</taxon>
        <taxon>Enterobacteriaceae</taxon>
        <taxon>ant endosymbionts</taxon>
        <taxon>Candidatus Blochmanniella</taxon>
    </lineage>
</organism>
<gene>
    <name evidence="1" type="primary">leuA</name>
    <name type="ordered locus">BPEN_137</name>
</gene>
<keyword id="KW-0028">Amino-acid biosynthesis</keyword>
<keyword id="KW-0100">Branched-chain amino acid biosynthesis</keyword>
<keyword id="KW-0963">Cytoplasm</keyword>
<keyword id="KW-0432">Leucine biosynthesis</keyword>
<keyword id="KW-0464">Manganese</keyword>
<keyword id="KW-0479">Metal-binding</keyword>
<keyword id="KW-1185">Reference proteome</keyword>
<keyword id="KW-0808">Transferase</keyword>
<name>LEU1_BLOPB</name>
<accession>Q493R0</accession>
<protein>
    <recommendedName>
        <fullName evidence="1">2-isopropylmalate synthase</fullName>
        <ecNumber evidence="1">2.3.3.13</ecNumber>
    </recommendedName>
    <alternativeName>
        <fullName evidence="1">Alpha-IPM synthase</fullName>
    </alternativeName>
    <alternativeName>
        <fullName evidence="1">Alpha-isopropylmalate synthase</fullName>
    </alternativeName>
</protein>
<dbReference type="EC" id="2.3.3.13" evidence="1"/>
<dbReference type="EMBL" id="CP000016">
    <property type="protein sequence ID" value="AAZ40777.1"/>
    <property type="molecule type" value="Genomic_DNA"/>
</dbReference>
<dbReference type="RefSeq" id="WP_011282684.1">
    <property type="nucleotide sequence ID" value="NC_007292.1"/>
</dbReference>
<dbReference type="SMR" id="Q493R0"/>
<dbReference type="STRING" id="291272.BPEN_137"/>
<dbReference type="KEGG" id="bpn:BPEN_137"/>
<dbReference type="eggNOG" id="COG0119">
    <property type="taxonomic scope" value="Bacteria"/>
</dbReference>
<dbReference type="HOGENOM" id="CLU_022158_0_1_6"/>
<dbReference type="OrthoDB" id="9803573at2"/>
<dbReference type="UniPathway" id="UPA00048">
    <property type="reaction ID" value="UER00070"/>
</dbReference>
<dbReference type="Proteomes" id="UP000007794">
    <property type="component" value="Chromosome"/>
</dbReference>
<dbReference type="GO" id="GO:0005829">
    <property type="term" value="C:cytosol"/>
    <property type="evidence" value="ECO:0007669"/>
    <property type="project" value="TreeGrafter"/>
</dbReference>
<dbReference type="GO" id="GO:0003852">
    <property type="term" value="F:2-isopropylmalate synthase activity"/>
    <property type="evidence" value="ECO:0007669"/>
    <property type="project" value="UniProtKB-UniRule"/>
</dbReference>
<dbReference type="GO" id="GO:0003985">
    <property type="term" value="F:acetyl-CoA C-acetyltransferase activity"/>
    <property type="evidence" value="ECO:0007669"/>
    <property type="project" value="UniProtKB-UniRule"/>
</dbReference>
<dbReference type="GO" id="GO:0030145">
    <property type="term" value="F:manganese ion binding"/>
    <property type="evidence" value="ECO:0007669"/>
    <property type="project" value="UniProtKB-UniRule"/>
</dbReference>
<dbReference type="GO" id="GO:0009098">
    <property type="term" value="P:L-leucine biosynthetic process"/>
    <property type="evidence" value="ECO:0007669"/>
    <property type="project" value="UniProtKB-UniRule"/>
</dbReference>
<dbReference type="CDD" id="cd07940">
    <property type="entry name" value="DRE_TIM_IPMS"/>
    <property type="match status" value="1"/>
</dbReference>
<dbReference type="FunFam" id="1.10.238.260:FF:000001">
    <property type="entry name" value="2-isopropylmalate synthase"/>
    <property type="match status" value="1"/>
</dbReference>
<dbReference type="FunFam" id="3.20.20.70:FF:000010">
    <property type="entry name" value="2-isopropylmalate synthase"/>
    <property type="match status" value="1"/>
</dbReference>
<dbReference type="FunFam" id="3.30.160.270:FF:000001">
    <property type="entry name" value="2-isopropylmalate synthase"/>
    <property type="match status" value="1"/>
</dbReference>
<dbReference type="Gene3D" id="1.10.238.260">
    <property type="match status" value="1"/>
</dbReference>
<dbReference type="Gene3D" id="3.30.160.270">
    <property type="match status" value="1"/>
</dbReference>
<dbReference type="Gene3D" id="3.20.20.70">
    <property type="entry name" value="Aldolase class I"/>
    <property type="match status" value="1"/>
</dbReference>
<dbReference type="HAMAP" id="MF_01025">
    <property type="entry name" value="LeuA_type1"/>
    <property type="match status" value="1"/>
</dbReference>
<dbReference type="InterPro" id="IPR050073">
    <property type="entry name" value="2-IPM_HCS-like"/>
</dbReference>
<dbReference type="InterPro" id="IPR013709">
    <property type="entry name" value="2-isopropylmalate_synth_dimer"/>
</dbReference>
<dbReference type="InterPro" id="IPR002034">
    <property type="entry name" value="AIPM/Hcit_synth_CS"/>
</dbReference>
<dbReference type="InterPro" id="IPR013785">
    <property type="entry name" value="Aldolase_TIM"/>
</dbReference>
<dbReference type="InterPro" id="IPR054691">
    <property type="entry name" value="LeuA/HCS_post-cat"/>
</dbReference>
<dbReference type="InterPro" id="IPR036230">
    <property type="entry name" value="LeuA_allosteric_dom_sf"/>
</dbReference>
<dbReference type="InterPro" id="IPR005671">
    <property type="entry name" value="LeuA_bact_synth"/>
</dbReference>
<dbReference type="InterPro" id="IPR000891">
    <property type="entry name" value="PYR_CT"/>
</dbReference>
<dbReference type="NCBIfam" id="TIGR00973">
    <property type="entry name" value="leuA_bact"/>
    <property type="match status" value="1"/>
</dbReference>
<dbReference type="NCBIfam" id="NF002084">
    <property type="entry name" value="PRK00915.1-1"/>
    <property type="match status" value="1"/>
</dbReference>
<dbReference type="NCBIfam" id="NF002086">
    <property type="entry name" value="PRK00915.1-3"/>
    <property type="match status" value="1"/>
</dbReference>
<dbReference type="PANTHER" id="PTHR10277:SF9">
    <property type="entry name" value="2-ISOPROPYLMALATE SYNTHASE 1, CHLOROPLASTIC-RELATED"/>
    <property type="match status" value="1"/>
</dbReference>
<dbReference type="PANTHER" id="PTHR10277">
    <property type="entry name" value="HOMOCITRATE SYNTHASE-RELATED"/>
    <property type="match status" value="1"/>
</dbReference>
<dbReference type="Pfam" id="PF22617">
    <property type="entry name" value="HCS_D2"/>
    <property type="match status" value="1"/>
</dbReference>
<dbReference type="Pfam" id="PF00682">
    <property type="entry name" value="HMGL-like"/>
    <property type="match status" value="1"/>
</dbReference>
<dbReference type="Pfam" id="PF08502">
    <property type="entry name" value="LeuA_dimer"/>
    <property type="match status" value="1"/>
</dbReference>
<dbReference type="SMART" id="SM00917">
    <property type="entry name" value="LeuA_dimer"/>
    <property type="match status" value="1"/>
</dbReference>
<dbReference type="SUPFAM" id="SSF110921">
    <property type="entry name" value="2-isopropylmalate synthase LeuA, allosteric (dimerisation) domain"/>
    <property type="match status" value="1"/>
</dbReference>
<dbReference type="SUPFAM" id="SSF51569">
    <property type="entry name" value="Aldolase"/>
    <property type="match status" value="1"/>
</dbReference>
<dbReference type="PROSITE" id="PS00815">
    <property type="entry name" value="AIPM_HOMOCIT_SYNTH_1"/>
    <property type="match status" value="1"/>
</dbReference>
<dbReference type="PROSITE" id="PS00816">
    <property type="entry name" value="AIPM_HOMOCIT_SYNTH_2"/>
    <property type="match status" value="1"/>
</dbReference>
<dbReference type="PROSITE" id="PS50991">
    <property type="entry name" value="PYR_CT"/>
    <property type="match status" value="1"/>
</dbReference>
<evidence type="ECO:0000255" key="1">
    <source>
        <dbReference type="HAMAP-Rule" id="MF_01025"/>
    </source>
</evidence>
<proteinExistence type="inferred from homology"/>